<name>RIBBA_CHLL3</name>
<reference key="1">
    <citation type="submission" date="2005-08" db="EMBL/GenBank/DDBJ databases">
        <title>Complete sequence of Pelodictyon luteolum DSM 273.</title>
        <authorList>
            <consortium name="US DOE Joint Genome Institute"/>
            <person name="Copeland A."/>
            <person name="Lucas S."/>
            <person name="Lapidus A."/>
            <person name="Barry K."/>
            <person name="Detter J.C."/>
            <person name="Glavina T."/>
            <person name="Hammon N."/>
            <person name="Israni S."/>
            <person name="Pitluck S."/>
            <person name="Bryant D."/>
            <person name="Schmutz J."/>
            <person name="Larimer F."/>
            <person name="Land M."/>
            <person name="Kyrpides N."/>
            <person name="Ivanova N."/>
            <person name="Richardson P."/>
        </authorList>
    </citation>
    <scope>NUCLEOTIDE SEQUENCE [LARGE SCALE GENOMIC DNA]</scope>
    <source>
        <strain>DSM 273 / BCRC 81028 / 2530</strain>
    </source>
</reference>
<keyword id="KW-0342">GTP-binding</keyword>
<keyword id="KW-0378">Hydrolase</keyword>
<keyword id="KW-0456">Lyase</keyword>
<keyword id="KW-0460">Magnesium</keyword>
<keyword id="KW-0464">Manganese</keyword>
<keyword id="KW-0479">Metal-binding</keyword>
<keyword id="KW-0511">Multifunctional enzyme</keyword>
<keyword id="KW-0547">Nucleotide-binding</keyword>
<keyword id="KW-1185">Reference proteome</keyword>
<keyword id="KW-0686">Riboflavin biosynthesis</keyword>
<keyword id="KW-0862">Zinc</keyword>
<evidence type="ECO:0000255" key="1">
    <source>
        <dbReference type="HAMAP-Rule" id="MF_01283"/>
    </source>
</evidence>
<accession>Q3B2I6</accession>
<dbReference type="EC" id="4.1.99.12" evidence="1"/>
<dbReference type="EC" id="3.5.4.25" evidence="1"/>
<dbReference type="EMBL" id="CP000096">
    <property type="protein sequence ID" value="ABB24445.1"/>
    <property type="molecule type" value="Genomic_DNA"/>
</dbReference>
<dbReference type="RefSeq" id="WP_011358317.1">
    <property type="nucleotide sequence ID" value="NC_007512.1"/>
</dbReference>
<dbReference type="SMR" id="Q3B2I6"/>
<dbReference type="STRING" id="319225.Plut_1591"/>
<dbReference type="KEGG" id="plt:Plut_1591"/>
<dbReference type="eggNOG" id="COG0108">
    <property type="taxonomic scope" value="Bacteria"/>
</dbReference>
<dbReference type="eggNOG" id="COG0807">
    <property type="taxonomic scope" value="Bacteria"/>
</dbReference>
<dbReference type="HOGENOM" id="CLU_020273_1_2_10"/>
<dbReference type="OrthoDB" id="9793111at2"/>
<dbReference type="UniPathway" id="UPA00275">
    <property type="reaction ID" value="UER00399"/>
</dbReference>
<dbReference type="UniPathway" id="UPA00275">
    <property type="reaction ID" value="UER00400"/>
</dbReference>
<dbReference type="Proteomes" id="UP000002709">
    <property type="component" value="Chromosome"/>
</dbReference>
<dbReference type="GO" id="GO:0005829">
    <property type="term" value="C:cytosol"/>
    <property type="evidence" value="ECO:0007669"/>
    <property type="project" value="TreeGrafter"/>
</dbReference>
<dbReference type="GO" id="GO:0008686">
    <property type="term" value="F:3,4-dihydroxy-2-butanone-4-phosphate synthase activity"/>
    <property type="evidence" value="ECO:0007669"/>
    <property type="project" value="UniProtKB-UniRule"/>
</dbReference>
<dbReference type="GO" id="GO:0005525">
    <property type="term" value="F:GTP binding"/>
    <property type="evidence" value="ECO:0007669"/>
    <property type="project" value="UniProtKB-KW"/>
</dbReference>
<dbReference type="GO" id="GO:0003935">
    <property type="term" value="F:GTP cyclohydrolase II activity"/>
    <property type="evidence" value="ECO:0007669"/>
    <property type="project" value="UniProtKB-UniRule"/>
</dbReference>
<dbReference type="GO" id="GO:0000287">
    <property type="term" value="F:magnesium ion binding"/>
    <property type="evidence" value="ECO:0007669"/>
    <property type="project" value="UniProtKB-UniRule"/>
</dbReference>
<dbReference type="GO" id="GO:0030145">
    <property type="term" value="F:manganese ion binding"/>
    <property type="evidence" value="ECO:0007669"/>
    <property type="project" value="UniProtKB-UniRule"/>
</dbReference>
<dbReference type="GO" id="GO:0008270">
    <property type="term" value="F:zinc ion binding"/>
    <property type="evidence" value="ECO:0007669"/>
    <property type="project" value="UniProtKB-UniRule"/>
</dbReference>
<dbReference type="GO" id="GO:0009231">
    <property type="term" value="P:riboflavin biosynthetic process"/>
    <property type="evidence" value="ECO:0007669"/>
    <property type="project" value="UniProtKB-UniRule"/>
</dbReference>
<dbReference type="CDD" id="cd00641">
    <property type="entry name" value="GTP_cyclohydro2"/>
    <property type="match status" value="1"/>
</dbReference>
<dbReference type="FunFam" id="3.40.50.10990:FF:000001">
    <property type="entry name" value="Riboflavin biosynthesis protein RibBA"/>
    <property type="match status" value="1"/>
</dbReference>
<dbReference type="FunFam" id="3.90.870.10:FF:000001">
    <property type="entry name" value="Riboflavin biosynthesis protein RibBA"/>
    <property type="match status" value="1"/>
</dbReference>
<dbReference type="Gene3D" id="3.90.870.10">
    <property type="entry name" value="DHBP synthase"/>
    <property type="match status" value="1"/>
</dbReference>
<dbReference type="Gene3D" id="3.40.50.10990">
    <property type="entry name" value="GTP cyclohydrolase II"/>
    <property type="match status" value="1"/>
</dbReference>
<dbReference type="HAMAP" id="MF_00179">
    <property type="entry name" value="RibA"/>
    <property type="match status" value="1"/>
</dbReference>
<dbReference type="HAMAP" id="MF_00180">
    <property type="entry name" value="RibB"/>
    <property type="match status" value="1"/>
</dbReference>
<dbReference type="HAMAP" id="MF_01283">
    <property type="entry name" value="RibBA"/>
    <property type="match status" value="1"/>
</dbReference>
<dbReference type="InterPro" id="IPR017945">
    <property type="entry name" value="DHBP_synth_RibB-like_a/b_dom"/>
</dbReference>
<dbReference type="InterPro" id="IPR000422">
    <property type="entry name" value="DHBP_synthase_RibB"/>
</dbReference>
<dbReference type="InterPro" id="IPR032677">
    <property type="entry name" value="GTP_cyclohydro_II"/>
</dbReference>
<dbReference type="InterPro" id="IPR000926">
    <property type="entry name" value="RibA"/>
</dbReference>
<dbReference type="InterPro" id="IPR036144">
    <property type="entry name" value="RibA-like_sf"/>
</dbReference>
<dbReference type="InterPro" id="IPR016299">
    <property type="entry name" value="Riboflavin_synth_RibBA"/>
</dbReference>
<dbReference type="NCBIfam" id="NF001591">
    <property type="entry name" value="PRK00393.1"/>
    <property type="match status" value="1"/>
</dbReference>
<dbReference type="NCBIfam" id="NF006803">
    <property type="entry name" value="PRK09311.1"/>
    <property type="match status" value="1"/>
</dbReference>
<dbReference type="NCBIfam" id="TIGR00505">
    <property type="entry name" value="ribA"/>
    <property type="match status" value="1"/>
</dbReference>
<dbReference type="NCBIfam" id="TIGR00506">
    <property type="entry name" value="ribB"/>
    <property type="match status" value="1"/>
</dbReference>
<dbReference type="PANTHER" id="PTHR21327:SF18">
    <property type="entry name" value="3,4-DIHYDROXY-2-BUTANONE 4-PHOSPHATE SYNTHASE"/>
    <property type="match status" value="1"/>
</dbReference>
<dbReference type="PANTHER" id="PTHR21327">
    <property type="entry name" value="GTP CYCLOHYDROLASE II-RELATED"/>
    <property type="match status" value="1"/>
</dbReference>
<dbReference type="Pfam" id="PF00926">
    <property type="entry name" value="DHBP_synthase"/>
    <property type="match status" value="1"/>
</dbReference>
<dbReference type="Pfam" id="PF00925">
    <property type="entry name" value="GTP_cyclohydro2"/>
    <property type="match status" value="1"/>
</dbReference>
<dbReference type="PIRSF" id="PIRSF001259">
    <property type="entry name" value="RibA"/>
    <property type="match status" value="1"/>
</dbReference>
<dbReference type="SUPFAM" id="SSF142695">
    <property type="entry name" value="RibA-like"/>
    <property type="match status" value="1"/>
</dbReference>
<dbReference type="SUPFAM" id="SSF55821">
    <property type="entry name" value="YrdC/RibB"/>
    <property type="match status" value="1"/>
</dbReference>
<proteinExistence type="inferred from homology"/>
<comment type="function">
    <text evidence="1">Catalyzes the conversion of D-ribulose 5-phosphate to formate and 3,4-dihydroxy-2-butanone 4-phosphate.</text>
</comment>
<comment type="function">
    <text evidence="1">Catalyzes the conversion of GTP to 2,5-diamino-6-ribosylamino-4(3H)-pyrimidinone 5'-phosphate (DARP), formate and pyrophosphate.</text>
</comment>
<comment type="catalytic activity">
    <reaction evidence="1">
        <text>D-ribulose 5-phosphate = (2S)-2-hydroxy-3-oxobutyl phosphate + formate + H(+)</text>
        <dbReference type="Rhea" id="RHEA:18457"/>
        <dbReference type="ChEBI" id="CHEBI:15378"/>
        <dbReference type="ChEBI" id="CHEBI:15740"/>
        <dbReference type="ChEBI" id="CHEBI:58121"/>
        <dbReference type="ChEBI" id="CHEBI:58830"/>
        <dbReference type="EC" id="4.1.99.12"/>
    </reaction>
</comment>
<comment type="catalytic activity">
    <reaction evidence="1">
        <text>GTP + 4 H2O = 2,5-diamino-6-hydroxy-4-(5-phosphoribosylamino)-pyrimidine + formate + 2 phosphate + 3 H(+)</text>
        <dbReference type="Rhea" id="RHEA:23704"/>
        <dbReference type="ChEBI" id="CHEBI:15377"/>
        <dbReference type="ChEBI" id="CHEBI:15378"/>
        <dbReference type="ChEBI" id="CHEBI:15740"/>
        <dbReference type="ChEBI" id="CHEBI:37565"/>
        <dbReference type="ChEBI" id="CHEBI:43474"/>
        <dbReference type="ChEBI" id="CHEBI:58614"/>
        <dbReference type="EC" id="3.5.4.25"/>
    </reaction>
</comment>
<comment type="cofactor">
    <cofactor evidence="1">
        <name>Mg(2+)</name>
        <dbReference type="ChEBI" id="CHEBI:18420"/>
    </cofactor>
    <cofactor evidence="1">
        <name>Mn(2+)</name>
        <dbReference type="ChEBI" id="CHEBI:29035"/>
    </cofactor>
    <text evidence="1">Binds 2 divalent metal cations per subunit. Magnesium or manganese.</text>
</comment>
<comment type="cofactor">
    <cofactor evidence="1">
        <name>Zn(2+)</name>
        <dbReference type="ChEBI" id="CHEBI:29105"/>
    </cofactor>
    <text evidence="1">Binds 1 zinc ion per subunit.</text>
</comment>
<comment type="pathway">
    <text evidence="1">Cofactor biosynthesis; riboflavin biosynthesis; 2-hydroxy-3-oxobutyl phosphate from D-ribulose 5-phosphate: step 1/1.</text>
</comment>
<comment type="pathway">
    <text evidence="1">Cofactor biosynthesis; riboflavin biosynthesis; 5-amino-6-(D-ribitylamino)uracil from GTP: step 1/4.</text>
</comment>
<comment type="similarity">
    <text evidence="1">In the N-terminal section; belongs to the DHBP synthase family.</text>
</comment>
<comment type="similarity">
    <text evidence="1">In the C-terminal section; belongs to the GTP cyclohydrolase II family.</text>
</comment>
<organism>
    <name type="scientific">Chlorobium luteolum (strain DSM 273 / BCRC 81028 / 2530)</name>
    <name type="common">Pelodictyon luteolum</name>
    <dbReference type="NCBI Taxonomy" id="319225"/>
    <lineage>
        <taxon>Bacteria</taxon>
        <taxon>Pseudomonadati</taxon>
        <taxon>Chlorobiota</taxon>
        <taxon>Chlorobiia</taxon>
        <taxon>Chlorobiales</taxon>
        <taxon>Chlorobiaceae</taxon>
        <taxon>Chlorobium/Pelodictyon group</taxon>
        <taxon>Pelodictyon</taxon>
    </lineage>
</organism>
<feature type="chain" id="PRO_1000165254" description="Riboflavin biosynthesis protein RibBA">
    <location>
        <begin position="1"/>
        <end position="409"/>
    </location>
</feature>
<feature type="region of interest" description="DHBP synthase">
    <location>
        <begin position="1"/>
        <end position="205"/>
    </location>
</feature>
<feature type="region of interest" description="GTP cyclohydrolase II">
    <location>
        <begin position="206"/>
        <end position="409"/>
    </location>
</feature>
<feature type="active site" description="Proton acceptor; for GTP cyclohydrolase activity" evidence="1">
    <location>
        <position position="333"/>
    </location>
</feature>
<feature type="active site" description="Nucleophile; for GTP cyclohydrolase activity" evidence="1">
    <location>
        <position position="335"/>
    </location>
</feature>
<feature type="binding site" evidence="1">
    <location>
        <begin position="30"/>
        <end position="31"/>
    </location>
    <ligand>
        <name>D-ribulose 5-phosphate</name>
        <dbReference type="ChEBI" id="CHEBI:58121"/>
    </ligand>
</feature>
<feature type="binding site" evidence="1">
    <location>
        <position position="31"/>
    </location>
    <ligand>
        <name>Mg(2+)</name>
        <dbReference type="ChEBI" id="CHEBI:18420"/>
        <label>1</label>
    </ligand>
</feature>
<feature type="binding site" evidence="1">
    <location>
        <position position="31"/>
    </location>
    <ligand>
        <name>Mg(2+)</name>
        <dbReference type="ChEBI" id="CHEBI:18420"/>
        <label>2</label>
    </ligand>
</feature>
<feature type="binding site" evidence="1">
    <location>
        <position position="35"/>
    </location>
    <ligand>
        <name>D-ribulose 5-phosphate</name>
        <dbReference type="ChEBI" id="CHEBI:58121"/>
    </ligand>
</feature>
<feature type="binding site" evidence="1">
    <location>
        <begin position="144"/>
        <end position="148"/>
    </location>
    <ligand>
        <name>D-ribulose 5-phosphate</name>
        <dbReference type="ChEBI" id="CHEBI:58121"/>
    </ligand>
</feature>
<feature type="binding site" evidence="1">
    <location>
        <position position="147"/>
    </location>
    <ligand>
        <name>Mg(2+)</name>
        <dbReference type="ChEBI" id="CHEBI:18420"/>
        <label>2</label>
    </ligand>
</feature>
<feature type="binding site" evidence="1">
    <location>
        <position position="168"/>
    </location>
    <ligand>
        <name>D-ribulose 5-phosphate</name>
        <dbReference type="ChEBI" id="CHEBI:58121"/>
    </ligand>
</feature>
<feature type="binding site" evidence="1">
    <location>
        <begin position="256"/>
        <end position="260"/>
    </location>
    <ligand>
        <name>GTP</name>
        <dbReference type="ChEBI" id="CHEBI:37565"/>
    </ligand>
</feature>
<feature type="binding site" evidence="1">
    <location>
        <position position="261"/>
    </location>
    <ligand>
        <name>Zn(2+)</name>
        <dbReference type="ChEBI" id="CHEBI:29105"/>
        <note>catalytic</note>
    </ligand>
</feature>
<feature type="binding site" evidence="1">
    <location>
        <position position="272"/>
    </location>
    <ligand>
        <name>Zn(2+)</name>
        <dbReference type="ChEBI" id="CHEBI:29105"/>
        <note>catalytic</note>
    </ligand>
</feature>
<feature type="binding site" evidence="1">
    <location>
        <position position="274"/>
    </location>
    <ligand>
        <name>Zn(2+)</name>
        <dbReference type="ChEBI" id="CHEBI:29105"/>
        <note>catalytic</note>
    </ligand>
</feature>
<feature type="binding site" evidence="1">
    <location>
        <position position="277"/>
    </location>
    <ligand>
        <name>GTP</name>
        <dbReference type="ChEBI" id="CHEBI:37565"/>
    </ligand>
</feature>
<feature type="binding site" evidence="1">
    <location>
        <begin position="299"/>
        <end position="301"/>
    </location>
    <ligand>
        <name>GTP</name>
        <dbReference type="ChEBI" id="CHEBI:37565"/>
    </ligand>
</feature>
<feature type="binding site" evidence="1">
    <location>
        <position position="321"/>
    </location>
    <ligand>
        <name>GTP</name>
        <dbReference type="ChEBI" id="CHEBI:37565"/>
    </ligand>
</feature>
<feature type="binding site" evidence="1">
    <location>
        <position position="356"/>
    </location>
    <ligand>
        <name>GTP</name>
        <dbReference type="ChEBI" id="CHEBI:37565"/>
    </ligand>
</feature>
<feature type="binding site" evidence="1">
    <location>
        <position position="361"/>
    </location>
    <ligand>
        <name>GTP</name>
        <dbReference type="ChEBI" id="CHEBI:37565"/>
    </ligand>
</feature>
<feature type="site" description="Essential for DHBP synthase activity" evidence="1">
    <location>
        <position position="130"/>
    </location>
</feature>
<feature type="site" description="Essential for DHBP synthase activity" evidence="1">
    <location>
        <position position="168"/>
    </location>
</feature>
<sequence length="409" mass="45364">MDTIKFDTIESAVEDIRQGKLVIVIDDEDRENEGDFIAAADHVTTEMINFITREARGLLCVAVTMERARELQLDPMVQRNTSQHETNFTVSVDAIAEGVTTGISVYDRATTIKMLGDPASHADSFSRPGHIFPLRAMDGGVLRRVGHTEAAVDLARLAGCSPVGLLCEILHDDGSMARLPELLKFKEKFGLKLITIKDLVAYRMQRNKLVERAVESKLPTAYGEFGLIAYESFIDHHNHMAFVKGDVSSGEPVLVRVHSQCATGDTFASLRCDCGNQLASALRMIEKEGRGVLVYLMQEGRGIGLINKLKAYNLQDEGFDTVEANEQLGFKADLRDYGIGAQILQDLGVRKMRLLTNNPKKVIGLEGYGLEIVERLPLEIAPNEVNQFYLETKRDKMGHMISCSCHKGH</sequence>
<gene>
    <name evidence="1" type="primary">ribBA</name>
    <name type="ordered locus">Plut_1591</name>
</gene>
<protein>
    <recommendedName>
        <fullName evidence="1">Riboflavin biosynthesis protein RibBA</fullName>
    </recommendedName>
    <domain>
        <recommendedName>
            <fullName evidence="1">3,4-dihydroxy-2-butanone 4-phosphate synthase</fullName>
            <shortName evidence="1">DHBP synthase</shortName>
            <ecNumber evidence="1">4.1.99.12</ecNumber>
        </recommendedName>
    </domain>
    <domain>
        <recommendedName>
            <fullName evidence="1">GTP cyclohydrolase-2</fullName>
            <ecNumber evidence="1">3.5.4.25</ecNumber>
        </recommendedName>
        <alternativeName>
            <fullName evidence="1">GTP cyclohydrolase II</fullName>
        </alternativeName>
    </domain>
</protein>